<gene>
    <name evidence="1" type="primary">trpD</name>
    <name type="ordered locus">Maeo_1116</name>
</gene>
<evidence type="ECO:0000255" key="1">
    <source>
        <dbReference type="HAMAP-Rule" id="MF_00211"/>
    </source>
</evidence>
<evidence type="ECO:0000305" key="2"/>
<dbReference type="EC" id="2.4.2.18" evidence="1"/>
<dbReference type="EMBL" id="CP000743">
    <property type="protein sequence ID" value="ABR56693.1"/>
    <property type="status" value="ALT_INIT"/>
    <property type="molecule type" value="Genomic_DNA"/>
</dbReference>
<dbReference type="RefSeq" id="WP_048062515.1">
    <property type="nucleotide sequence ID" value="NC_009635.1"/>
</dbReference>
<dbReference type="SMR" id="A6UW21"/>
<dbReference type="STRING" id="419665.Maeo_1116"/>
<dbReference type="GeneID" id="5327087"/>
<dbReference type="KEGG" id="mae:Maeo_1116"/>
<dbReference type="eggNOG" id="arCOG02012">
    <property type="taxonomic scope" value="Archaea"/>
</dbReference>
<dbReference type="HOGENOM" id="CLU_034315_2_1_2"/>
<dbReference type="OrthoDB" id="8214at2157"/>
<dbReference type="UniPathway" id="UPA00035">
    <property type="reaction ID" value="UER00041"/>
</dbReference>
<dbReference type="Proteomes" id="UP000001106">
    <property type="component" value="Chromosome"/>
</dbReference>
<dbReference type="GO" id="GO:0005829">
    <property type="term" value="C:cytosol"/>
    <property type="evidence" value="ECO:0007669"/>
    <property type="project" value="TreeGrafter"/>
</dbReference>
<dbReference type="GO" id="GO:0004048">
    <property type="term" value="F:anthranilate phosphoribosyltransferase activity"/>
    <property type="evidence" value="ECO:0007669"/>
    <property type="project" value="UniProtKB-UniRule"/>
</dbReference>
<dbReference type="GO" id="GO:0000287">
    <property type="term" value="F:magnesium ion binding"/>
    <property type="evidence" value="ECO:0007669"/>
    <property type="project" value="UniProtKB-UniRule"/>
</dbReference>
<dbReference type="GO" id="GO:0000162">
    <property type="term" value="P:L-tryptophan biosynthetic process"/>
    <property type="evidence" value="ECO:0007669"/>
    <property type="project" value="UniProtKB-UniRule"/>
</dbReference>
<dbReference type="FunFam" id="3.40.1030.10:FF:000010">
    <property type="entry name" value="Anthranilate phosphoribosyltransferase"/>
    <property type="match status" value="1"/>
</dbReference>
<dbReference type="Gene3D" id="3.40.1030.10">
    <property type="entry name" value="Nucleoside phosphorylase/phosphoribosyltransferase catalytic domain"/>
    <property type="match status" value="1"/>
</dbReference>
<dbReference type="Gene3D" id="1.20.970.10">
    <property type="entry name" value="Transferase, Pyrimidine Nucleoside Phosphorylase, Chain C"/>
    <property type="match status" value="1"/>
</dbReference>
<dbReference type="HAMAP" id="MF_00211">
    <property type="entry name" value="TrpD"/>
    <property type="match status" value="1"/>
</dbReference>
<dbReference type="InterPro" id="IPR005940">
    <property type="entry name" value="Anthranilate_Pribosyl_Tfrase"/>
</dbReference>
<dbReference type="InterPro" id="IPR000312">
    <property type="entry name" value="Glycosyl_Trfase_fam3"/>
</dbReference>
<dbReference type="InterPro" id="IPR017459">
    <property type="entry name" value="Glycosyl_Trfase_fam3_N_dom"/>
</dbReference>
<dbReference type="InterPro" id="IPR036320">
    <property type="entry name" value="Glycosyl_Trfase_fam3_N_dom_sf"/>
</dbReference>
<dbReference type="InterPro" id="IPR035902">
    <property type="entry name" value="Nuc_phospho_transferase"/>
</dbReference>
<dbReference type="NCBIfam" id="TIGR01245">
    <property type="entry name" value="trpD"/>
    <property type="match status" value="1"/>
</dbReference>
<dbReference type="PANTHER" id="PTHR43285">
    <property type="entry name" value="ANTHRANILATE PHOSPHORIBOSYLTRANSFERASE"/>
    <property type="match status" value="1"/>
</dbReference>
<dbReference type="PANTHER" id="PTHR43285:SF2">
    <property type="entry name" value="ANTHRANILATE PHOSPHORIBOSYLTRANSFERASE"/>
    <property type="match status" value="1"/>
</dbReference>
<dbReference type="Pfam" id="PF02885">
    <property type="entry name" value="Glycos_trans_3N"/>
    <property type="match status" value="1"/>
</dbReference>
<dbReference type="Pfam" id="PF00591">
    <property type="entry name" value="Glycos_transf_3"/>
    <property type="match status" value="1"/>
</dbReference>
<dbReference type="SUPFAM" id="SSF52418">
    <property type="entry name" value="Nucleoside phosphorylase/phosphoribosyltransferase catalytic domain"/>
    <property type="match status" value="1"/>
</dbReference>
<dbReference type="SUPFAM" id="SSF47648">
    <property type="entry name" value="Nucleoside phosphorylase/phosphoribosyltransferase N-terminal domain"/>
    <property type="match status" value="1"/>
</dbReference>
<feature type="chain" id="PRO_0000325480" description="Anthranilate phosphoribosyltransferase">
    <location>
        <begin position="1"/>
        <end position="325"/>
    </location>
</feature>
<feature type="binding site" evidence="1">
    <location>
        <position position="73"/>
    </location>
    <ligand>
        <name>5-phospho-alpha-D-ribose 1-diphosphate</name>
        <dbReference type="ChEBI" id="CHEBI:58017"/>
    </ligand>
</feature>
<feature type="binding site" evidence="1">
    <location>
        <position position="73"/>
    </location>
    <ligand>
        <name>anthranilate</name>
        <dbReference type="ChEBI" id="CHEBI:16567"/>
        <label>1</label>
    </ligand>
</feature>
<feature type="binding site" evidence="1">
    <location>
        <begin position="76"/>
        <end position="77"/>
    </location>
    <ligand>
        <name>5-phospho-alpha-D-ribose 1-diphosphate</name>
        <dbReference type="ChEBI" id="CHEBI:58017"/>
    </ligand>
</feature>
<feature type="binding site" evidence="1">
    <location>
        <position position="81"/>
    </location>
    <ligand>
        <name>5-phospho-alpha-D-ribose 1-diphosphate</name>
        <dbReference type="ChEBI" id="CHEBI:58017"/>
    </ligand>
</feature>
<feature type="binding site" evidence="1">
    <location>
        <begin position="83"/>
        <end position="86"/>
    </location>
    <ligand>
        <name>5-phospho-alpha-D-ribose 1-diphosphate</name>
        <dbReference type="ChEBI" id="CHEBI:58017"/>
    </ligand>
</feature>
<feature type="binding site" evidence="1">
    <location>
        <position position="85"/>
    </location>
    <ligand>
        <name>Mg(2+)</name>
        <dbReference type="ChEBI" id="CHEBI:18420"/>
        <label>1</label>
    </ligand>
</feature>
<feature type="binding site" evidence="1">
    <location>
        <begin position="100"/>
        <end position="108"/>
    </location>
    <ligand>
        <name>5-phospho-alpha-D-ribose 1-diphosphate</name>
        <dbReference type="ChEBI" id="CHEBI:58017"/>
    </ligand>
</feature>
<feature type="binding site" evidence="1">
    <location>
        <position position="103"/>
    </location>
    <ligand>
        <name>anthranilate</name>
        <dbReference type="ChEBI" id="CHEBI:16567"/>
        <label>1</label>
    </ligand>
</feature>
<feature type="binding site" evidence="1">
    <location>
        <position position="112"/>
    </location>
    <ligand>
        <name>5-phospho-alpha-D-ribose 1-diphosphate</name>
        <dbReference type="ChEBI" id="CHEBI:58017"/>
    </ligand>
</feature>
<feature type="binding site" evidence="1">
    <location>
        <position position="158"/>
    </location>
    <ligand>
        <name>anthranilate</name>
        <dbReference type="ChEBI" id="CHEBI:16567"/>
        <label>2</label>
    </ligand>
</feature>
<feature type="binding site" evidence="1">
    <location>
        <position position="216"/>
    </location>
    <ligand>
        <name>Mg(2+)</name>
        <dbReference type="ChEBI" id="CHEBI:18420"/>
        <label>2</label>
    </ligand>
</feature>
<feature type="binding site" evidence="1">
    <location>
        <position position="217"/>
    </location>
    <ligand>
        <name>Mg(2+)</name>
        <dbReference type="ChEBI" id="CHEBI:18420"/>
        <label>1</label>
    </ligand>
</feature>
<feature type="binding site" evidence="1">
    <location>
        <position position="217"/>
    </location>
    <ligand>
        <name>Mg(2+)</name>
        <dbReference type="ChEBI" id="CHEBI:18420"/>
        <label>2</label>
    </ligand>
</feature>
<comment type="function">
    <text evidence="1">Catalyzes the transfer of the phosphoribosyl group of 5-phosphorylribose-1-pyrophosphate (PRPP) to anthranilate to yield N-(5'-phosphoribosyl)-anthranilate (PRA).</text>
</comment>
<comment type="catalytic activity">
    <reaction evidence="1">
        <text>N-(5-phospho-beta-D-ribosyl)anthranilate + diphosphate = 5-phospho-alpha-D-ribose 1-diphosphate + anthranilate</text>
        <dbReference type="Rhea" id="RHEA:11768"/>
        <dbReference type="ChEBI" id="CHEBI:16567"/>
        <dbReference type="ChEBI" id="CHEBI:18277"/>
        <dbReference type="ChEBI" id="CHEBI:33019"/>
        <dbReference type="ChEBI" id="CHEBI:58017"/>
        <dbReference type="EC" id="2.4.2.18"/>
    </reaction>
</comment>
<comment type="cofactor">
    <cofactor evidence="1">
        <name>Mg(2+)</name>
        <dbReference type="ChEBI" id="CHEBI:18420"/>
    </cofactor>
    <text evidence="1">Binds 2 magnesium ions per monomer.</text>
</comment>
<comment type="pathway">
    <text evidence="1">Amino-acid biosynthesis; L-tryptophan biosynthesis; L-tryptophan from chorismate: step 2/5.</text>
</comment>
<comment type="subunit">
    <text evidence="1">Homodimer.</text>
</comment>
<comment type="similarity">
    <text evidence="1">Belongs to the anthranilate phosphoribosyltransferase family.</text>
</comment>
<comment type="sequence caution" evidence="2">
    <conflict type="erroneous initiation">
        <sequence resource="EMBL-CDS" id="ABR56693"/>
    </conflict>
    <text>Extended N-terminus.</text>
</comment>
<accession>A6UW21</accession>
<organism>
    <name type="scientific">Methanococcus aeolicus (strain ATCC BAA-1280 / DSM 17508 / OCM 812 / Nankai-3)</name>
    <dbReference type="NCBI Taxonomy" id="419665"/>
    <lineage>
        <taxon>Archaea</taxon>
        <taxon>Methanobacteriati</taxon>
        <taxon>Methanobacteriota</taxon>
        <taxon>Methanomada group</taxon>
        <taxon>Methanococci</taxon>
        <taxon>Methanococcales</taxon>
        <taxon>Methanococcaceae</taxon>
        <taxon>Methanococcus</taxon>
    </lineage>
</organism>
<sequence length="325" mass="35499">MLNKIINREDLSYEESYDLFNDLLNESEIKIGAYLSALQTKGFTANEIAGFAKAMRDNAIAIDLGKGISDTCGTGGDGYSTINISTAVSIILSCFTKVAKHGNVSITSKSGSANVLDALNIKKDCNPEEAKKMIDKTNFVFLFAPNYHPALKKIMPVRKELGIKTIFNILGPLANPANPDYQIMGVNSLDLVEKVGDALKLLGVKKALVVYGNGLDELNPNDYSTICEINENEENKIYKIHPKDIGLTPSNPIPCNSPDESAKRIIKIFSGTINEDRDFILLNAAAALYASNIAKDYKEGLKLAKEVIDNGTVLKKLKEIQKYGE</sequence>
<protein>
    <recommendedName>
        <fullName evidence="1">Anthranilate phosphoribosyltransferase</fullName>
        <ecNumber evidence="1">2.4.2.18</ecNumber>
    </recommendedName>
</protein>
<keyword id="KW-0028">Amino-acid biosynthesis</keyword>
<keyword id="KW-0057">Aromatic amino acid biosynthesis</keyword>
<keyword id="KW-0328">Glycosyltransferase</keyword>
<keyword id="KW-0460">Magnesium</keyword>
<keyword id="KW-0479">Metal-binding</keyword>
<keyword id="KW-0808">Transferase</keyword>
<keyword id="KW-0822">Tryptophan biosynthesis</keyword>
<name>TRPD_META3</name>
<reference key="1">
    <citation type="submission" date="2007-06" db="EMBL/GenBank/DDBJ databases">
        <title>Complete sequence of Methanococcus aeolicus Nankai-3.</title>
        <authorList>
            <consortium name="US DOE Joint Genome Institute"/>
            <person name="Copeland A."/>
            <person name="Lucas S."/>
            <person name="Lapidus A."/>
            <person name="Barry K."/>
            <person name="Glavina del Rio T."/>
            <person name="Dalin E."/>
            <person name="Tice H."/>
            <person name="Pitluck S."/>
            <person name="Chain P."/>
            <person name="Malfatti S."/>
            <person name="Shin M."/>
            <person name="Vergez L."/>
            <person name="Schmutz J."/>
            <person name="Larimer F."/>
            <person name="Land M."/>
            <person name="Hauser L."/>
            <person name="Kyrpides N."/>
            <person name="Lykidis A."/>
            <person name="Sieprawska-Lupa M."/>
            <person name="Whitman W.B."/>
            <person name="Richardson P."/>
        </authorList>
    </citation>
    <scope>NUCLEOTIDE SEQUENCE [LARGE SCALE GENOMIC DNA]</scope>
    <source>
        <strain>ATCC BAA-1280 / DSM 17508 / OCM 812 / Nankai-3</strain>
    </source>
</reference>
<proteinExistence type="inferred from homology"/>